<keyword id="KW-0040">ANK repeat</keyword>
<keyword id="KW-0479">Metal-binding</keyword>
<keyword id="KW-1185">Reference proteome</keyword>
<keyword id="KW-0677">Repeat</keyword>
<keyword id="KW-0862">Zinc</keyword>
<keyword id="KW-0863">Zinc-finger</keyword>
<feature type="chain" id="PRO_0000320065" description="Ankyrin repeat and MYND domain-containing protein 1">
    <location>
        <begin position="1"/>
        <end position="906"/>
    </location>
</feature>
<feature type="repeat" description="MORN 1">
    <location>
        <begin position="16"/>
        <end position="38"/>
    </location>
</feature>
<feature type="repeat" description="MORN 2">
    <location>
        <begin position="39"/>
        <end position="59"/>
    </location>
</feature>
<feature type="repeat" description="MORN 3">
    <location>
        <begin position="61"/>
        <end position="83"/>
    </location>
</feature>
<feature type="repeat" description="ANK 1">
    <location>
        <begin position="282"/>
        <end position="311"/>
    </location>
</feature>
<feature type="repeat" description="ANK 2">
    <location>
        <begin position="479"/>
        <end position="508"/>
    </location>
</feature>
<feature type="repeat" description="ANK 3">
    <location>
        <begin position="511"/>
        <end position="540"/>
    </location>
</feature>
<feature type="repeat" description="ANK 4">
    <location>
        <begin position="547"/>
        <end position="579"/>
    </location>
</feature>
<feature type="repeat" description="ANK 5">
    <location>
        <begin position="623"/>
        <end position="657"/>
    </location>
</feature>
<feature type="repeat" description="ANK 6">
    <location>
        <begin position="660"/>
        <end position="689"/>
    </location>
</feature>
<feature type="repeat" description="ANK 7">
    <location>
        <begin position="701"/>
        <end position="732"/>
    </location>
</feature>
<feature type="zinc finger region" description="MYND-type" evidence="1">
    <location>
        <begin position="845"/>
        <end position="885"/>
    </location>
</feature>
<feature type="region of interest" description="Disordered" evidence="2">
    <location>
        <begin position="391"/>
        <end position="411"/>
    </location>
</feature>
<feature type="compositionally biased region" description="Polar residues" evidence="2">
    <location>
        <begin position="391"/>
        <end position="400"/>
    </location>
</feature>
<feature type="binding site" evidence="1">
    <location>
        <position position="845"/>
    </location>
    <ligand>
        <name>Zn(2+)</name>
        <dbReference type="ChEBI" id="CHEBI:29105"/>
        <label>1</label>
    </ligand>
</feature>
<feature type="binding site" evidence="1">
    <location>
        <position position="848"/>
    </location>
    <ligand>
        <name>Zn(2+)</name>
        <dbReference type="ChEBI" id="CHEBI:29105"/>
        <label>1</label>
    </ligand>
</feature>
<feature type="binding site" evidence="1">
    <location>
        <position position="859"/>
    </location>
    <ligand>
        <name>Zn(2+)</name>
        <dbReference type="ChEBI" id="CHEBI:29105"/>
        <label>2</label>
    </ligand>
</feature>
<feature type="binding site" evidence="1">
    <location>
        <position position="862"/>
    </location>
    <ligand>
        <name>Zn(2+)</name>
        <dbReference type="ChEBI" id="CHEBI:29105"/>
        <label>2</label>
    </ligand>
</feature>
<feature type="binding site" evidence="1">
    <location>
        <position position="868"/>
    </location>
    <ligand>
        <name>Zn(2+)</name>
        <dbReference type="ChEBI" id="CHEBI:29105"/>
        <label>1</label>
    </ligand>
</feature>
<feature type="binding site" evidence="1">
    <location>
        <position position="872"/>
    </location>
    <ligand>
        <name>Zn(2+)</name>
        <dbReference type="ChEBI" id="CHEBI:29105"/>
        <label>1</label>
    </ligand>
</feature>
<feature type="binding site" evidence="1">
    <location>
        <position position="881"/>
    </location>
    <ligand>
        <name>Zn(2+)</name>
        <dbReference type="ChEBI" id="CHEBI:29105"/>
        <label>2</label>
    </ligand>
</feature>
<feature type="binding site" evidence="1">
    <location>
        <position position="885"/>
    </location>
    <ligand>
        <name>Zn(2+)</name>
        <dbReference type="ChEBI" id="CHEBI:29105"/>
        <label>2</label>
    </ligand>
</feature>
<feature type="sequence conflict" description="In Ref. 2; AAI20888." evidence="3" ref="2">
    <location>
        <position position="813"/>
    </location>
</feature>
<proteinExistence type="evidence at protein level"/>
<accession>Q8C0W1</accession>
<accession>Q0IJ76</accession>
<organism>
    <name type="scientific">Mus musculus</name>
    <name type="common">Mouse</name>
    <dbReference type="NCBI Taxonomy" id="10090"/>
    <lineage>
        <taxon>Eukaryota</taxon>
        <taxon>Metazoa</taxon>
        <taxon>Chordata</taxon>
        <taxon>Craniata</taxon>
        <taxon>Vertebrata</taxon>
        <taxon>Euteleostomi</taxon>
        <taxon>Mammalia</taxon>
        <taxon>Eutheria</taxon>
        <taxon>Euarchontoglires</taxon>
        <taxon>Glires</taxon>
        <taxon>Rodentia</taxon>
        <taxon>Myomorpha</taxon>
        <taxon>Muroidea</taxon>
        <taxon>Muridae</taxon>
        <taxon>Murinae</taxon>
        <taxon>Mus</taxon>
        <taxon>Mus</taxon>
    </lineage>
</organism>
<name>ANMY1_MOUSE</name>
<sequence>MKLGYGEFSWPTGEAYHGQFYRDHFHGLGTYTWPDGSSFTGTFYLSQREGYGTMHTKTMLFQGLYKEDQRFGPGIETYPDGSQDVGLWFREYLLKLCTRVPSGFSLVNYPEFLAFLTKSRRRLDLSDEKVELGLSEEQDPFFYDYKQYLLNDELKLPPEMHVYSTDNSHLPMTDSLRQELDDHIFMNEIPPFIEDEEPWLITNETPLLVKIQKQTYKFRNKDAHTSWNIPAILEGNRSRFGPSGPKEQISKKMIMKAEEGDYNWIFGILRDNLACADVADSKGYTVLAAAAMHSHLDIVNLLLDFGADVNKRSDEGITPLSMCFLQYYPCKSFHPNIAERTLLQESPKSLVTPKISFLLADANIDYLYDVGMPIAGGDELKTSSLDDSLASMQTPESSNMLHKEEVSPVKTVSTDVEKESEGAAENVDASTLYSVDTNFESTKCLRNYTINVSRDIMEKSAQAYSSLPQHPCFPYKGTVRKMAQSMVERRNRWMTITLLLRRGADPNLCQVPMQALFLAVKAGDVEGVRLLLMSGAQTDIQFPPQLQSLTPLHIAVSLPGEEGVKITELLLHVITNVDAKAADEDYVYKGGKADLLPSSLKLNNEPGPPKSFYSTHTFIPEEGGRTALHVACEREDNKKCARDIVRLLLSHRANPNVLWSGHSPLSLAIASGNDLVVKELLSQGADPNLPLTKGLGTALCVVCDLVYEQQRSVENKIALIDRLISYGADVLNPVTLVQGDRTAVGTAVDYGYFKFFQDRKIAHCPFHALMPAEREVFMARKRLLEYLGLQLRLAVLSKESRLDTKALYLSKRAELAPCHRLKKKGSSSVRTQSSEKQSIPFYKFCYQCGRSIGVRLSPCPRCYGILTCSKYCKTKAWIEFHKKDCNDIMAMIPHLEGSAWRVAESP</sequence>
<evidence type="ECO:0000255" key="1">
    <source>
        <dbReference type="PROSITE-ProRule" id="PRU00134"/>
    </source>
</evidence>
<evidence type="ECO:0000256" key="2">
    <source>
        <dbReference type="SAM" id="MobiDB-lite"/>
    </source>
</evidence>
<evidence type="ECO:0000305" key="3"/>
<dbReference type="EMBL" id="AK029700">
    <property type="protein sequence ID" value="BAC26572.1"/>
    <property type="molecule type" value="mRNA"/>
</dbReference>
<dbReference type="EMBL" id="BC120887">
    <property type="protein sequence ID" value="AAI20888.1"/>
    <property type="molecule type" value="mRNA"/>
</dbReference>
<dbReference type="EMBL" id="BC120888">
    <property type="protein sequence ID" value="AAI20889.1"/>
    <property type="molecule type" value="mRNA"/>
</dbReference>
<dbReference type="RefSeq" id="NP_766438.2">
    <property type="nucleotide sequence ID" value="NM_172850.3"/>
</dbReference>
<dbReference type="SMR" id="Q8C0W1"/>
<dbReference type="FunCoup" id="Q8C0W1">
    <property type="interactions" value="7"/>
</dbReference>
<dbReference type="STRING" id="10090.ENSMUSP00000123787"/>
<dbReference type="iPTMnet" id="Q8C0W1"/>
<dbReference type="PhosphoSitePlus" id="Q8C0W1"/>
<dbReference type="PaxDb" id="10090-ENSMUSP00000108622"/>
<dbReference type="ProteomicsDB" id="281993"/>
<dbReference type="DNASU" id="241158"/>
<dbReference type="GeneID" id="241158"/>
<dbReference type="KEGG" id="mmu:241158"/>
<dbReference type="AGR" id="MGI:3045261"/>
<dbReference type="CTD" id="51281"/>
<dbReference type="MGI" id="MGI:3045261">
    <property type="gene designation" value="Ankmy1"/>
</dbReference>
<dbReference type="eggNOG" id="ENOG502QQJP">
    <property type="taxonomic scope" value="Eukaryota"/>
</dbReference>
<dbReference type="InParanoid" id="Q8C0W1"/>
<dbReference type="OrthoDB" id="48314at2759"/>
<dbReference type="BioGRID-ORCS" id="241158">
    <property type="hits" value="1 hit in 76 CRISPR screens"/>
</dbReference>
<dbReference type="PRO" id="PR:Q8C0W1"/>
<dbReference type="Proteomes" id="UP000000589">
    <property type="component" value="Unplaced"/>
</dbReference>
<dbReference type="RNAct" id="Q8C0W1">
    <property type="molecule type" value="protein"/>
</dbReference>
<dbReference type="GO" id="GO:0008270">
    <property type="term" value="F:zinc ion binding"/>
    <property type="evidence" value="ECO:0007669"/>
    <property type="project" value="UniProtKB-KW"/>
</dbReference>
<dbReference type="Gene3D" id="1.25.40.20">
    <property type="entry name" value="Ankyrin repeat-containing domain"/>
    <property type="match status" value="2"/>
</dbReference>
<dbReference type="Gene3D" id="2.20.110.10">
    <property type="entry name" value="Histone H3 K4-specific methyltransferase SET7/9 N-terminal domain"/>
    <property type="match status" value="1"/>
</dbReference>
<dbReference type="InterPro" id="IPR053064">
    <property type="entry name" value="Ankyrin-MYND_domain-protein"/>
</dbReference>
<dbReference type="InterPro" id="IPR002110">
    <property type="entry name" value="Ankyrin_rpt"/>
</dbReference>
<dbReference type="InterPro" id="IPR036770">
    <property type="entry name" value="Ankyrin_rpt-contain_sf"/>
</dbReference>
<dbReference type="InterPro" id="IPR003409">
    <property type="entry name" value="MORN"/>
</dbReference>
<dbReference type="InterPro" id="IPR002893">
    <property type="entry name" value="Znf_MYND"/>
</dbReference>
<dbReference type="PANTHER" id="PTHR15897">
    <property type="entry name" value="ANKYRIN REPEAT AND MYND DOMAIN PROTEIN 1"/>
    <property type="match status" value="1"/>
</dbReference>
<dbReference type="PANTHER" id="PTHR15897:SF2">
    <property type="entry name" value="ANKYRIN REPEAT AND MYND DOMAIN-CONTAINING PROTEIN 1"/>
    <property type="match status" value="1"/>
</dbReference>
<dbReference type="Pfam" id="PF12796">
    <property type="entry name" value="Ank_2"/>
    <property type="match status" value="2"/>
</dbReference>
<dbReference type="Pfam" id="PF13637">
    <property type="entry name" value="Ank_4"/>
    <property type="match status" value="1"/>
</dbReference>
<dbReference type="Pfam" id="PF02493">
    <property type="entry name" value="MORN"/>
    <property type="match status" value="2"/>
</dbReference>
<dbReference type="Pfam" id="PF01753">
    <property type="entry name" value="zf-MYND"/>
    <property type="match status" value="1"/>
</dbReference>
<dbReference type="SMART" id="SM00248">
    <property type="entry name" value="ANK"/>
    <property type="match status" value="5"/>
</dbReference>
<dbReference type="SMART" id="SM00698">
    <property type="entry name" value="MORN"/>
    <property type="match status" value="2"/>
</dbReference>
<dbReference type="SUPFAM" id="SSF48403">
    <property type="entry name" value="Ankyrin repeat"/>
    <property type="match status" value="2"/>
</dbReference>
<dbReference type="SUPFAM" id="SSF82185">
    <property type="entry name" value="Histone H3 K4-specific methyltransferase SET7/9 N-terminal domain"/>
    <property type="match status" value="1"/>
</dbReference>
<dbReference type="SUPFAM" id="SSF144232">
    <property type="entry name" value="HIT/MYND zinc finger-like"/>
    <property type="match status" value="1"/>
</dbReference>
<dbReference type="PROSITE" id="PS50297">
    <property type="entry name" value="ANK_REP_REGION"/>
    <property type="match status" value="2"/>
</dbReference>
<dbReference type="PROSITE" id="PS50088">
    <property type="entry name" value="ANK_REPEAT"/>
    <property type="match status" value="3"/>
</dbReference>
<dbReference type="PROSITE" id="PS01360">
    <property type="entry name" value="ZF_MYND_1"/>
    <property type="match status" value="1"/>
</dbReference>
<dbReference type="PROSITE" id="PS50865">
    <property type="entry name" value="ZF_MYND_2"/>
    <property type="match status" value="1"/>
</dbReference>
<reference key="1">
    <citation type="journal article" date="2005" name="Science">
        <title>The transcriptional landscape of the mammalian genome.</title>
        <authorList>
            <person name="Carninci P."/>
            <person name="Kasukawa T."/>
            <person name="Katayama S."/>
            <person name="Gough J."/>
            <person name="Frith M.C."/>
            <person name="Maeda N."/>
            <person name="Oyama R."/>
            <person name="Ravasi T."/>
            <person name="Lenhard B."/>
            <person name="Wells C."/>
            <person name="Kodzius R."/>
            <person name="Shimokawa K."/>
            <person name="Bajic V.B."/>
            <person name="Brenner S.E."/>
            <person name="Batalov S."/>
            <person name="Forrest A.R."/>
            <person name="Zavolan M."/>
            <person name="Davis M.J."/>
            <person name="Wilming L.G."/>
            <person name="Aidinis V."/>
            <person name="Allen J.E."/>
            <person name="Ambesi-Impiombato A."/>
            <person name="Apweiler R."/>
            <person name="Aturaliya R.N."/>
            <person name="Bailey T.L."/>
            <person name="Bansal M."/>
            <person name="Baxter L."/>
            <person name="Beisel K.W."/>
            <person name="Bersano T."/>
            <person name="Bono H."/>
            <person name="Chalk A.M."/>
            <person name="Chiu K.P."/>
            <person name="Choudhary V."/>
            <person name="Christoffels A."/>
            <person name="Clutterbuck D.R."/>
            <person name="Crowe M.L."/>
            <person name="Dalla E."/>
            <person name="Dalrymple B.P."/>
            <person name="de Bono B."/>
            <person name="Della Gatta G."/>
            <person name="di Bernardo D."/>
            <person name="Down T."/>
            <person name="Engstrom P."/>
            <person name="Fagiolini M."/>
            <person name="Faulkner G."/>
            <person name="Fletcher C.F."/>
            <person name="Fukushima T."/>
            <person name="Furuno M."/>
            <person name="Futaki S."/>
            <person name="Gariboldi M."/>
            <person name="Georgii-Hemming P."/>
            <person name="Gingeras T.R."/>
            <person name="Gojobori T."/>
            <person name="Green R.E."/>
            <person name="Gustincich S."/>
            <person name="Harbers M."/>
            <person name="Hayashi Y."/>
            <person name="Hensch T.K."/>
            <person name="Hirokawa N."/>
            <person name="Hill D."/>
            <person name="Huminiecki L."/>
            <person name="Iacono M."/>
            <person name="Ikeo K."/>
            <person name="Iwama A."/>
            <person name="Ishikawa T."/>
            <person name="Jakt M."/>
            <person name="Kanapin A."/>
            <person name="Katoh M."/>
            <person name="Kawasawa Y."/>
            <person name="Kelso J."/>
            <person name="Kitamura H."/>
            <person name="Kitano H."/>
            <person name="Kollias G."/>
            <person name="Krishnan S.P."/>
            <person name="Kruger A."/>
            <person name="Kummerfeld S.K."/>
            <person name="Kurochkin I.V."/>
            <person name="Lareau L.F."/>
            <person name="Lazarevic D."/>
            <person name="Lipovich L."/>
            <person name="Liu J."/>
            <person name="Liuni S."/>
            <person name="McWilliam S."/>
            <person name="Madan Babu M."/>
            <person name="Madera M."/>
            <person name="Marchionni L."/>
            <person name="Matsuda H."/>
            <person name="Matsuzawa S."/>
            <person name="Miki H."/>
            <person name="Mignone F."/>
            <person name="Miyake S."/>
            <person name="Morris K."/>
            <person name="Mottagui-Tabar S."/>
            <person name="Mulder N."/>
            <person name="Nakano N."/>
            <person name="Nakauchi H."/>
            <person name="Ng P."/>
            <person name="Nilsson R."/>
            <person name="Nishiguchi S."/>
            <person name="Nishikawa S."/>
            <person name="Nori F."/>
            <person name="Ohara O."/>
            <person name="Okazaki Y."/>
            <person name="Orlando V."/>
            <person name="Pang K.C."/>
            <person name="Pavan W.J."/>
            <person name="Pavesi G."/>
            <person name="Pesole G."/>
            <person name="Petrovsky N."/>
            <person name="Piazza S."/>
            <person name="Reed J."/>
            <person name="Reid J.F."/>
            <person name="Ring B.Z."/>
            <person name="Ringwald M."/>
            <person name="Rost B."/>
            <person name="Ruan Y."/>
            <person name="Salzberg S.L."/>
            <person name="Sandelin A."/>
            <person name="Schneider C."/>
            <person name="Schoenbach C."/>
            <person name="Sekiguchi K."/>
            <person name="Semple C.A."/>
            <person name="Seno S."/>
            <person name="Sessa L."/>
            <person name="Sheng Y."/>
            <person name="Shibata Y."/>
            <person name="Shimada H."/>
            <person name="Shimada K."/>
            <person name="Silva D."/>
            <person name="Sinclair B."/>
            <person name="Sperling S."/>
            <person name="Stupka E."/>
            <person name="Sugiura K."/>
            <person name="Sultana R."/>
            <person name="Takenaka Y."/>
            <person name="Taki K."/>
            <person name="Tammoja K."/>
            <person name="Tan S.L."/>
            <person name="Tang S."/>
            <person name="Taylor M.S."/>
            <person name="Tegner J."/>
            <person name="Teichmann S.A."/>
            <person name="Ueda H.R."/>
            <person name="van Nimwegen E."/>
            <person name="Verardo R."/>
            <person name="Wei C.L."/>
            <person name="Yagi K."/>
            <person name="Yamanishi H."/>
            <person name="Zabarovsky E."/>
            <person name="Zhu S."/>
            <person name="Zimmer A."/>
            <person name="Hide W."/>
            <person name="Bult C."/>
            <person name="Grimmond S.M."/>
            <person name="Teasdale R.D."/>
            <person name="Liu E.T."/>
            <person name="Brusic V."/>
            <person name="Quackenbush J."/>
            <person name="Wahlestedt C."/>
            <person name="Mattick J.S."/>
            <person name="Hume D.A."/>
            <person name="Kai C."/>
            <person name="Sasaki D."/>
            <person name="Tomaru Y."/>
            <person name="Fukuda S."/>
            <person name="Kanamori-Katayama M."/>
            <person name="Suzuki M."/>
            <person name="Aoki J."/>
            <person name="Arakawa T."/>
            <person name="Iida J."/>
            <person name="Imamura K."/>
            <person name="Itoh M."/>
            <person name="Kato T."/>
            <person name="Kawaji H."/>
            <person name="Kawagashira N."/>
            <person name="Kawashima T."/>
            <person name="Kojima M."/>
            <person name="Kondo S."/>
            <person name="Konno H."/>
            <person name="Nakano K."/>
            <person name="Ninomiya N."/>
            <person name="Nishio T."/>
            <person name="Okada M."/>
            <person name="Plessy C."/>
            <person name="Shibata K."/>
            <person name="Shiraki T."/>
            <person name="Suzuki S."/>
            <person name="Tagami M."/>
            <person name="Waki K."/>
            <person name="Watahiki A."/>
            <person name="Okamura-Oho Y."/>
            <person name="Suzuki H."/>
            <person name="Kawai J."/>
            <person name="Hayashizaki Y."/>
        </authorList>
    </citation>
    <scope>NUCLEOTIDE SEQUENCE [LARGE SCALE MRNA]</scope>
    <source>
        <strain>C57BL/6J</strain>
        <tissue>Testis</tissue>
    </source>
</reference>
<reference key="2">
    <citation type="journal article" date="2004" name="Genome Res.">
        <title>The status, quality, and expansion of the NIH full-length cDNA project: the Mammalian Gene Collection (MGC).</title>
        <authorList>
            <consortium name="The MGC Project Team"/>
        </authorList>
    </citation>
    <scope>NUCLEOTIDE SEQUENCE [LARGE SCALE MRNA]</scope>
</reference>
<reference key="3">
    <citation type="journal article" date="2010" name="Cell">
        <title>A tissue-specific atlas of mouse protein phosphorylation and expression.</title>
        <authorList>
            <person name="Huttlin E.L."/>
            <person name="Jedrychowski M.P."/>
            <person name="Elias J.E."/>
            <person name="Goswami T."/>
            <person name="Rad R."/>
            <person name="Beausoleil S.A."/>
            <person name="Villen J."/>
            <person name="Haas W."/>
            <person name="Sowa M.E."/>
            <person name="Gygi S.P."/>
        </authorList>
    </citation>
    <scope>IDENTIFICATION BY MASS SPECTROMETRY [LARGE SCALE ANALYSIS]</scope>
    <source>
        <tissue>Testis</tissue>
    </source>
</reference>
<gene>
    <name type="primary">Ankmy1</name>
</gene>
<protein>
    <recommendedName>
        <fullName>Ankyrin repeat and MYND domain-containing protein 1</fullName>
    </recommendedName>
</protein>